<reference key="1">
    <citation type="journal article" date="2004" name="Nat. Biotechnol.">
        <title>The genome sequence of the capnophilic rumen bacterium Mannheimia succiniciproducens.</title>
        <authorList>
            <person name="Hong S.H."/>
            <person name="Kim J.S."/>
            <person name="Lee S.Y."/>
            <person name="In Y.H."/>
            <person name="Choi S.S."/>
            <person name="Rih J.-K."/>
            <person name="Kim C.H."/>
            <person name="Jeong H."/>
            <person name="Hur C.G."/>
            <person name="Kim J.J."/>
        </authorList>
    </citation>
    <scope>NUCLEOTIDE SEQUENCE [LARGE SCALE GENOMIC DNA]</scope>
    <source>
        <strain>KCTC 0769BP / MBEL55E</strain>
    </source>
</reference>
<feature type="chain" id="PRO_0000258837" description="UPF0301 protein MS0260">
    <location>
        <begin position="1"/>
        <end position="185"/>
    </location>
</feature>
<gene>
    <name type="ordered locus">MS0260</name>
</gene>
<name>Y260_MANSM</name>
<sequence>MELQDKLLIAMPNLQDSYFSQSVIYICEHNEQGAMGLVLNQVTDLSIAELVAKLNFMMADGRHYPETYVFAGGPVSMDRGFILHTATERTFEHSYRVTDNLQLTTSEDVIETFGTPEAPEKYLVALGCATWTSGQLEKEIADNDWLVVPANNHILFDVPWAECWTAAQQLLGFQPANLVAEAGYC</sequence>
<evidence type="ECO:0000255" key="1">
    <source>
        <dbReference type="HAMAP-Rule" id="MF_00758"/>
    </source>
</evidence>
<evidence type="ECO:0000305" key="2"/>
<protein>
    <recommendedName>
        <fullName evidence="1">UPF0301 protein MS0260</fullName>
    </recommendedName>
</protein>
<comment type="similarity">
    <text evidence="1">Belongs to the UPF0301 (AlgH) family.</text>
</comment>
<comment type="sequence caution" evidence="2">
    <conflict type="erroneous initiation">
        <sequence resource="EMBL-CDS" id="AAU36867"/>
    </conflict>
</comment>
<organism>
    <name type="scientific">Mannheimia succiniciproducens (strain KCTC 0769BP / MBEL55E)</name>
    <dbReference type="NCBI Taxonomy" id="221988"/>
    <lineage>
        <taxon>Bacteria</taxon>
        <taxon>Pseudomonadati</taxon>
        <taxon>Pseudomonadota</taxon>
        <taxon>Gammaproteobacteria</taxon>
        <taxon>Pasteurellales</taxon>
        <taxon>Pasteurellaceae</taxon>
        <taxon>Basfia</taxon>
    </lineage>
</organism>
<accession>Q65VZ3</accession>
<dbReference type="EMBL" id="AE016827">
    <property type="protein sequence ID" value="AAU36867.1"/>
    <property type="status" value="ALT_INIT"/>
    <property type="molecule type" value="Genomic_DNA"/>
</dbReference>
<dbReference type="RefSeq" id="WP_011199442.1">
    <property type="nucleotide sequence ID" value="NC_006300.1"/>
</dbReference>
<dbReference type="SMR" id="Q65VZ3"/>
<dbReference type="STRING" id="221988.MS0260"/>
<dbReference type="KEGG" id="msu:MS0260"/>
<dbReference type="eggNOG" id="COG1678">
    <property type="taxonomic scope" value="Bacteria"/>
</dbReference>
<dbReference type="HOGENOM" id="CLU_057596_1_0_6"/>
<dbReference type="OrthoDB" id="9807486at2"/>
<dbReference type="Proteomes" id="UP000000607">
    <property type="component" value="Chromosome"/>
</dbReference>
<dbReference type="GO" id="GO:0005829">
    <property type="term" value="C:cytosol"/>
    <property type="evidence" value="ECO:0007669"/>
    <property type="project" value="TreeGrafter"/>
</dbReference>
<dbReference type="Gene3D" id="3.40.1740.10">
    <property type="entry name" value="VC0467-like"/>
    <property type="match status" value="1"/>
</dbReference>
<dbReference type="HAMAP" id="MF_00758">
    <property type="entry name" value="UPF0301"/>
    <property type="match status" value="1"/>
</dbReference>
<dbReference type="InterPro" id="IPR003774">
    <property type="entry name" value="AlgH-like"/>
</dbReference>
<dbReference type="NCBIfam" id="NF001266">
    <property type="entry name" value="PRK00228.1-1"/>
    <property type="match status" value="1"/>
</dbReference>
<dbReference type="PANTHER" id="PTHR30327">
    <property type="entry name" value="UNCHARACTERIZED PROTEIN YQGE"/>
    <property type="match status" value="1"/>
</dbReference>
<dbReference type="PANTHER" id="PTHR30327:SF1">
    <property type="entry name" value="UPF0301 PROTEIN YQGE"/>
    <property type="match status" value="1"/>
</dbReference>
<dbReference type="Pfam" id="PF02622">
    <property type="entry name" value="DUF179"/>
    <property type="match status" value="1"/>
</dbReference>
<dbReference type="SUPFAM" id="SSF143456">
    <property type="entry name" value="VC0467-like"/>
    <property type="match status" value="1"/>
</dbReference>
<proteinExistence type="inferred from homology"/>